<feature type="signal peptide" evidence="2">
    <location>
        <begin position="1"/>
        <end position="22"/>
    </location>
</feature>
<feature type="chain" id="PRO_0000380655" description="Cysteine-rich venom protein VAR4">
    <location>
        <begin position="23"/>
        <end position="170" status="greater than"/>
    </location>
</feature>
<feature type="domain" description="SCP">
    <location>
        <begin position="41"/>
        <end position="169"/>
    </location>
</feature>
<feature type="disulfide bond" evidence="1">
    <location>
        <begin position="77"/>
        <end position="156"/>
    </location>
</feature>
<feature type="disulfide bond" evidence="1">
    <location>
        <begin position="95"/>
        <end position="170"/>
    </location>
</feature>
<feature type="disulfide bond" evidence="1">
    <location>
        <begin position="151"/>
        <end position="167"/>
    </location>
</feature>
<feature type="non-terminal residue">
    <location>
        <position position="170"/>
    </location>
</feature>
<protein>
    <recommendedName>
        <fullName>Cysteine-rich venom protein VAR4</fullName>
        <shortName>CRVP</shortName>
    </recommendedName>
    <alternativeName>
        <fullName>Cysteine-rich secretory protein VAR4</fullName>
        <shortName>CRISP-VAR4</shortName>
    </alternativeName>
</protein>
<reference key="1">
    <citation type="journal article" date="2006" name="Nature">
        <title>Early evolution of the venom system in lizards and snakes.</title>
        <authorList>
            <person name="Fry B.G."/>
            <person name="Vidal N."/>
            <person name="Norman J.A."/>
            <person name="Vonk F.J."/>
            <person name="Scheib H."/>
            <person name="Ramjan S.F.R."/>
            <person name="Kuruppu S."/>
            <person name="Fung K."/>
            <person name="Blair Hedges S."/>
            <person name="Richardson M.K."/>
            <person name="Hodgson W.C."/>
            <person name="Ignjatovic V."/>
            <person name="Summerhayes R."/>
            <person name="Kochva E."/>
        </authorList>
    </citation>
    <scope>NUCLEOTIDE SEQUENCE [LARGE SCALE MRNA]</scope>
    <source>
        <tissue>Venom gland</tissue>
    </source>
</reference>
<sequence length="170" mass="19419">MILLKLYLTLAAILCQSRGTTSLDLDDLMTTNPEIQNEIINKHNDLRRTVDPPAKNMLKMSWDNIIAESAKRAALRCNQNEHTPVSGRTIGGVVCGENYFMSSNPRTWSFGIQSWFDERNYFKFGFGPTRAGVMVGHYTQVVWYKSYKMGCAINLCPNEPLKYFLVCQYC</sequence>
<comment type="function">
    <text evidence="1">Blocks ryanodine receptors, and potassium channels.</text>
</comment>
<comment type="subcellular location">
    <subcellularLocation>
        <location evidence="1">Secreted</location>
    </subcellularLocation>
</comment>
<comment type="tissue specificity">
    <text>Expressed by the venom gland.</text>
</comment>
<comment type="PTM">
    <text evidence="1">Contains 8 disulfide bonds.</text>
</comment>
<comment type="similarity">
    <text evidence="3">Belongs to the CRISP family.</text>
</comment>
<proteinExistence type="evidence at transcript level"/>
<name>CRVP4_VARAC</name>
<evidence type="ECO:0000250" key="1"/>
<evidence type="ECO:0000255" key="2"/>
<evidence type="ECO:0000305" key="3"/>
<accession>Q2XXR1</accession>
<dbReference type="EMBL" id="DQ139884">
    <property type="protein sequence ID" value="AAZ75590.1"/>
    <property type="molecule type" value="mRNA"/>
</dbReference>
<dbReference type="SMR" id="Q2XXR1"/>
<dbReference type="GO" id="GO:0005576">
    <property type="term" value="C:extracellular region"/>
    <property type="evidence" value="ECO:0007669"/>
    <property type="project" value="UniProtKB-SubCell"/>
</dbReference>
<dbReference type="GO" id="GO:0005246">
    <property type="term" value="F:calcium channel regulator activity"/>
    <property type="evidence" value="ECO:0007669"/>
    <property type="project" value="UniProtKB-KW"/>
</dbReference>
<dbReference type="GO" id="GO:0015459">
    <property type="term" value="F:potassium channel regulator activity"/>
    <property type="evidence" value="ECO:0007669"/>
    <property type="project" value="UniProtKB-KW"/>
</dbReference>
<dbReference type="GO" id="GO:0090729">
    <property type="term" value="F:toxin activity"/>
    <property type="evidence" value="ECO:0007669"/>
    <property type="project" value="UniProtKB-KW"/>
</dbReference>
<dbReference type="CDD" id="cd05383">
    <property type="entry name" value="CAP_CRISP"/>
    <property type="match status" value="1"/>
</dbReference>
<dbReference type="Gene3D" id="3.40.33.10">
    <property type="entry name" value="CAP"/>
    <property type="match status" value="1"/>
</dbReference>
<dbReference type="InterPro" id="IPR018244">
    <property type="entry name" value="Allrgn_V5/Tpx1_CS"/>
</dbReference>
<dbReference type="InterPro" id="IPR014044">
    <property type="entry name" value="CAP_dom"/>
</dbReference>
<dbReference type="InterPro" id="IPR035940">
    <property type="entry name" value="CAP_sf"/>
</dbReference>
<dbReference type="InterPro" id="IPR001283">
    <property type="entry name" value="CRISP-related"/>
</dbReference>
<dbReference type="InterPro" id="IPR034117">
    <property type="entry name" value="SCP_CRISP"/>
</dbReference>
<dbReference type="InterPro" id="IPR002413">
    <property type="entry name" value="V5_allergen-like"/>
</dbReference>
<dbReference type="PANTHER" id="PTHR10334">
    <property type="entry name" value="CYSTEINE-RICH SECRETORY PROTEIN-RELATED"/>
    <property type="match status" value="1"/>
</dbReference>
<dbReference type="Pfam" id="PF00188">
    <property type="entry name" value="CAP"/>
    <property type="match status" value="1"/>
</dbReference>
<dbReference type="PRINTS" id="PR00838">
    <property type="entry name" value="V5ALLERGEN"/>
</dbReference>
<dbReference type="PRINTS" id="PR00837">
    <property type="entry name" value="V5TPXLIKE"/>
</dbReference>
<dbReference type="SMART" id="SM00198">
    <property type="entry name" value="SCP"/>
    <property type="match status" value="1"/>
</dbReference>
<dbReference type="SUPFAM" id="SSF55797">
    <property type="entry name" value="PR-1-like"/>
    <property type="match status" value="1"/>
</dbReference>
<dbReference type="PROSITE" id="PS01009">
    <property type="entry name" value="CRISP_1"/>
    <property type="match status" value="1"/>
</dbReference>
<organism>
    <name type="scientific">Varanus acanthurus</name>
    <name type="common">Ridge-tailed monitor</name>
    <dbReference type="NCBI Taxonomy" id="62035"/>
    <lineage>
        <taxon>Eukaryota</taxon>
        <taxon>Metazoa</taxon>
        <taxon>Chordata</taxon>
        <taxon>Craniata</taxon>
        <taxon>Vertebrata</taxon>
        <taxon>Euteleostomi</taxon>
        <taxon>Lepidosauria</taxon>
        <taxon>Squamata</taxon>
        <taxon>Bifurcata</taxon>
        <taxon>Unidentata</taxon>
        <taxon>Episquamata</taxon>
        <taxon>Toxicofera</taxon>
        <taxon>Anguimorpha</taxon>
        <taxon>Paleoanguimorpha</taxon>
        <taxon>Varanoidea</taxon>
        <taxon>Varanidae</taxon>
        <taxon>Varanus</taxon>
    </lineage>
</organism>
<keyword id="KW-0108">Calcium channel impairing toxin</keyword>
<keyword id="KW-1015">Disulfide bond</keyword>
<keyword id="KW-0872">Ion channel impairing toxin</keyword>
<keyword id="KW-0528">Neurotoxin</keyword>
<keyword id="KW-0632">Potassium channel impairing toxin</keyword>
<keyword id="KW-0964">Secreted</keyword>
<keyword id="KW-0732">Signal</keyword>
<keyword id="KW-0800">Toxin</keyword>